<feature type="chain" id="PRO_1000081101" description="Glutamate 5-kinase">
    <location>
        <begin position="1"/>
        <end position="369"/>
    </location>
</feature>
<feature type="domain" description="PUA" evidence="1">
    <location>
        <begin position="277"/>
        <end position="355"/>
    </location>
</feature>
<feature type="binding site" evidence="1">
    <location>
        <position position="14"/>
    </location>
    <ligand>
        <name>ATP</name>
        <dbReference type="ChEBI" id="CHEBI:30616"/>
    </ligand>
</feature>
<feature type="binding site" evidence="1">
    <location>
        <position position="54"/>
    </location>
    <ligand>
        <name>substrate</name>
    </ligand>
</feature>
<feature type="binding site" evidence="1">
    <location>
        <position position="141"/>
    </location>
    <ligand>
        <name>substrate</name>
    </ligand>
</feature>
<feature type="binding site" evidence="1">
    <location>
        <position position="153"/>
    </location>
    <ligand>
        <name>substrate</name>
    </ligand>
</feature>
<feature type="binding site" evidence="1">
    <location>
        <begin position="173"/>
        <end position="174"/>
    </location>
    <ligand>
        <name>ATP</name>
        <dbReference type="ChEBI" id="CHEBI:30616"/>
    </ligand>
</feature>
<feature type="binding site" evidence="1">
    <location>
        <begin position="215"/>
        <end position="221"/>
    </location>
    <ligand>
        <name>ATP</name>
        <dbReference type="ChEBI" id="CHEBI:30616"/>
    </ligand>
</feature>
<comment type="function">
    <text evidence="1">Catalyzes the transfer of a phosphate group to glutamate to form L-glutamate 5-phosphate.</text>
</comment>
<comment type="catalytic activity">
    <reaction evidence="1">
        <text>L-glutamate + ATP = L-glutamyl 5-phosphate + ADP</text>
        <dbReference type="Rhea" id="RHEA:14877"/>
        <dbReference type="ChEBI" id="CHEBI:29985"/>
        <dbReference type="ChEBI" id="CHEBI:30616"/>
        <dbReference type="ChEBI" id="CHEBI:58274"/>
        <dbReference type="ChEBI" id="CHEBI:456216"/>
        <dbReference type="EC" id="2.7.2.11"/>
    </reaction>
</comment>
<comment type="pathway">
    <text evidence="1">Amino-acid biosynthesis; L-proline biosynthesis; L-glutamate 5-semialdehyde from L-glutamate: step 1/2.</text>
</comment>
<comment type="subcellular location">
    <subcellularLocation>
        <location evidence="1">Cytoplasm</location>
    </subcellularLocation>
</comment>
<comment type="similarity">
    <text evidence="1">Belongs to the glutamate 5-kinase family.</text>
</comment>
<keyword id="KW-0028">Amino-acid biosynthesis</keyword>
<keyword id="KW-0067">ATP-binding</keyword>
<keyword id="KW-0963">Cytoplasm</keyword>
<keyword id="KW-0418">Kinase</keyword>
<keyword id="KW-0547">Nucleotide-binding</keyword>
<keyword id="KW-0641">Proline biosynthesis</keyword>
<keyword id="KW-0808">Transferase</keyword>
<name>PROB_SALAI</name>
<organism>
    <name type="scientific">Salinispora arenicola (strain CNS-205)</name>
    <dbReference type="NCBI Taxonomy" id="391037"/>
    <lineage>
        <taxon>Bacteria</taxon>
        <taxon>Bacillati</taxon>
        <taxon>Actinomycetota</taxon>
        <taxon>Actinomycetes</taxon>
        <taxon>Micromonosporales</taxon>
        <taxon>Micromonosporaceae</taxon>
        <taxon>Salinispora</taxon>
    </lineage>
</organism>
<gene>
    <name evidence="1" type="primary">proB</name>
    <name type="ordered locus">Sare_0457</name>
</gene>
<protein>
    <recommendedName>
        <fullName evidence="1">Glutamate 5-kinase</fullName>
        <ecNumber evidence="1">2.7.2.11</ecNumber>
    </recommendedName>
    <alternativeName>
        <fullName evidence="1">Gamma-glutamyl kinase</fullName>
        <shortName evidence="1">GK</shortName>
    </alternativeName>
</protein>
<accession>A8M065</accession>
<evidence type="ECO:0000255" key="1">
    <source>
        <dbReference type="HAMAP-Rule" id="MF_00456"/>
    </source>
</evidence>
<sequence>MRDRVTAARRVVVKIGSSSLTTATGGLDDGRVDALVDTLGGLAAQGREVVLVSSGAIAAGLAPLGLTRRPRDLATQQAAASVGQGLLIGRYAAAFARHHLTVGQVLLTVDDMTRRAHYRNAYRTLRKLLDLRAVPIVNENDTVATEEIRFGDNDRLAALVAALVDTDLLVLLSDVDALWTGDPTRPGSTPIAEVHDARDLSGVAIGGAGRSGVGTGGMVTKVEAARIATGFGIPVVLTSADLAAEALDGKPVGTLFHPSPRRPAARLFWLAHATSPRGRLHLDPGAVEAVVDRRKSLLAAGISAVQGAFTAGDPVDLVDTEGVPVARGLVNYDAVELPGLLGRSTSELATALGPAYEREVVHCDDLVLL</sequence>
<reference key="1">
    <citation type="submission" date="2007-10" db="EMBL/GenBank/DDBJ databases">
        <title>Complete sequence of Salinispora arenicola CNS-205.</title>
        <authorList>
            <consortium name="US DOE Joint Genome Institute"/>
            <person name="Copeland A."/>
            <person name="Lucas S."/>
            <person name="Lapidus A."/>
            <person name="Barry K."/>
            <person name="Glavina del Rio T."/>
            <person name="Dalin E."/>
            <person name="Tice H."/>
            <person name="Pitluck S."/>
            <person name="Foster B."/>
            <person name="Schmutz J."/>
            <person name="Larimer F."/>
            <person name="Land M."/>
            <person name="Hauser L."/>
            <person name="Kyrpides N."/>
            <person name="Ivanova N."/>
            <person name="Jensen P.R."/>
            <person name="Moore B.S."/>
            <person name="Penn K."/>
            <person name="Jenkins C."/>
            <person name="Udwary D."/>
            <person name="Xiang L."/>
            <person name="Gontang E."/>
            <person name="Richardson P."/>
        </authorList>
    </citation>
    <scope>NUCLEOTIDE SEQUENCE [LARGE SCALE GENOMIC DNA]</scope>
    <source>
        <strain>CNS-205</strain>
    </source>
</reference>
<proteinExistence type="inferred from homology"/>
<dbReference type="EC" id="2.7.2.11" evidence="1"/>
<dbReference type="EMBL" id="CP000850">
    <property type="protein sequence ID" value="ABV96386.1"/>
    <property type="molecule type" value="Genomic_DNA"/>
</dbReference>
<dbReference type="SMR" id="A8M065"/>
<dbReference type="STRING" id="391037.Sare_0457"/>
<dbReference type="KEGG" id="saq:Sare_0457"/>
<dbReference type="eggNOG" id="COG0263">
    <property type="taxonomic scope" value="Bacteria"/>
</dbReference>
<dbReference type="HOGENOM" id="CLU_025400_2_0_11"/>
<dbReference type="UniPathway" id="UPA00098">
    <property type="reaction ID" value="UER00359"/>
</dbReference>
<dbReference type="GO" id="GO:0005829">
    <property type="term" value="C:cytosol"/>
    <property type="evidence" value="ECO:0007669"/>
    <property type="project" value="TreeGrafter"/>
</dbReference>
<dbReference type="GO" id="GO:0005524">
    <property type="term" value="F:ATP binding"/>
    <property type="evidence" value="ECO:0007669"/>
    <property type="project" value="UniProtKB-KW"/>
</dbReference>
<dbReference type="GO" id="GO:0004349">
    <property type="term" value="F:glutamate 5-kinase activity"/>
    <property type="evidence" value="ECO:0007669"/>
    <property type="project" value="UniProtKB-UniRule"/>
</dbReference>
<dbReference type="GO" id="GO:0003723">
    <property type="term" value="F:RNA binding"/>
    <property type="evidence" value="ECO:0007669"/>
    <property type="project" value="InterPro"/>
</dbReference>
<dbReference type="GO" id="GO:0055129">
    <property type="term" value="P:L-proline biosynthetic process"/>
    <property type="evidence" value="ECO:0007669"/>
    <property type="project" value="UniProtKB-UniRule"/>
</dbReference>
<dbReference type="CDD" id="cd04242">
    <property type="entry name" value="AAK_G5K_ProB"/>
    <property type="match status" value="1"/>
</dbReference>
<dbReference type="CDD" id="cd21157">
    <property type="entry name" value="PUA_G5K"/>
    <property type="match status" value="1"/>
</dbReference>
<dbReference type="FunFam" id="3.40.1160.10:FF:000018">
    <property type="entry name" value="Glutamate 5-kinase"/>
    <property type="match status" value="1"/>
</dbReference>
<dbReference type="Gene3D" id="3.40.1160.10">
    <property type="entry name" value="Acetylglutamate kinase-like"/>
    <property type="match status" value="1"/>
</dbReference>
<dbReference type="Gene3D" id="2.30.130.10">
    <property type="entry name" value="PUA domain"/>
    <property type="match status" value="1"/>
</dbReference>
<dbReference type="HAMAP" id="MF_00456">
    <property type="entry name" value="ProB"/>
    <property type="match status" value="1"/>
</dbReference>
<dbReference type="InterPro" id="IPR036393">
    <property type="entry name" value="AceGlu_kinase-like_sf"/>
</dbReference>
<dbReference type="InterPro" id="IPR001048">
    <property type="entry name" value="Asp/Glu/Uridylate_kinase"/>
</dbReference>
<dbReference type="InterPro" id="IPR041739">
    <property type="entry name" value="G5K_ProB"/>
</dbReference>
<dbReference type="InterPro" id="IPR001057">
    <property type="entry name" value="Glu/AcGlu_kinase"/>
</dbReference>
<dbReference type="InterPro" id="IPR011529">
    <property type="entry name" value="Glu_5kinase"/>
</dbReference>
<dbReference type="InterPro" id="IPR005715">
    <property type="entry name" value="Glu_5kinase/COase_Synthase"/>
</dbReference>
<dbReference type="InterPro" id="IPR019797">
    <property type="entry name" value="Glutamate_5-kinase_CS"/>
</dbReference>
<dbReference type="InterPro" id="IPR002478">
    <property type="entry name" value="PUA"/>
</dbReference>
<dbReference type="InterPro" id="IPR015947">
    <property type="entry name" value="PUA-like_sf"/>
</dbReference>
<dbReference type="InterPro" id="IPR036974">
    <property type="entry name" value="PUA_sf"/>
</dbReference>
<dbReference type="NCBIfam" id="TIGR01027">
    <property type="entry name" value="proB"/>
    <property type="match status" value="1"/>
</dbReference>
<dbReference type="PANTHER" id="PTHR43654">
    <property type="entry name" value="GLUTAMATE 5-KINASE"/>
    <property type="match status" value="1"/>
</dbReference>
<dbReference type="PANTHER" id="PTHR43654:SF1">
    <property type="entry name" value="ISOPENTENYL PHOSPHATE KINASE"/>
    <property type="match status" value="1"/>
</dbReference>
<dbReference type="Pfam" id="PF00696">
    <property type="entry name" value="AA_kinase"/>
    <property type="match status" value="1"/>
</dbReference>
<dbReference type="Pfam" id="PF01472">
    <property type="entry name" value="PUA"/>
    <property type="match status" value="1"/>
</dbReference>
<dbReference type="PIRSF" id="PIRSF000729">
    <property type="entry name" value="GK"/>
    <property type="match status" value="1"/>
</dbReference>
<dbReference type="PRINTS" id="PR00474">
    <property type="entry name" value="GLU5KINASE"/>
</dbReference>
<dbReference type="SMART" id="SM00359">
    <property type="entry name" value="PUA"/>
    <property type="match status" value="1"/>
</dbReference>
<dbReference type="SUPFAM" id="SSF53633">
    <property type="entry name" value="Carbamate kinase-like"/>
    <property type="match status" value="1"/>
</dbReference>
<dbReference type="SUPFAM" id="SSF88697">
    <property type="entry name" value="PUA domain-like"/>
    <property type="match status" value="1"/>
</dbReference>
<dbReference type="PROSITE" id="PS00902">
    <property type="entry name" value="GLUTAMATE_5_KINASE"/>
    <property type="match status" value="1"/>
</dbReference>
<dbReference type="PROSITE" id="PS50890">
    <property type="entry name" value="PUA"/>
    <property type="match status" value="1"/>
</dbReference>